<accession>Q9SHK2</accession>
<organism>
    <name type="scientific">Arabidopsis thaliana</name>
    <name type="common">Mouse-ear cress</name>
    <dbReference type="NCBI Taxonomy" id="3702"/>
    <lineage>
        <taxon>Eukaryota</taxon>
        <taxon>Viridiplantae</taxon>
        <taxon>Streptophyta</taxon>
        <taxon>Embryophyta</taxon>
        <taxon>Tracheophyta</taxon>
        <taxon>Spermatophyta</taxon>
        <taxon>Magnoliopsida</taxon>
        <taxon>eudicotyledons</taxon>
        <taxon>Gunneridae</taxon>
        <taxon>Pentapetalae</taxon>
        <taxon>rosids</taxon>
        <taxon>malvids</taxon>
        <taxon>Brassicales</taxon>
        <taxon>Brassicaceae</taxon>
        <taxon>Camelineae</taxon>
        <taxon>Arabidopsis</taxon>
    </lineage>
</organism>
<protein>
    <recommendedName>
        <fullName>Pentatricopeptide repeat-containing protein At1g06580</fullName>
    </recommendedName>
</protein>
<comment type="similarity">
    <text evidence="1">Belongs to the PPR family. P subfamily.</text>
</comment>
<comment type="sequence caution" evidence="1">
    <conflict type="frameshift">
        <sequence resource="EMBL" id="AK229240"/>
    </conflict>
</comment>
<comment type="online information" name="Pentatricopeptide repeat proteins">
    <link uri="https://ppr.plantenergy.uwa.edu.au"/>
</comment>
<sequence>MRRSIVIVIALTAKGFLHRHLLEKGNLVTALSLRICNSRAFSGRSDYRERLRSGLHSIKFNDALTLFCDMAESHPLPSIVDFSRLLIAIAKLNKYEAVISLFRHLEMLGISHDLYSFTTLIDCFCRCARLSLALSCLGKMMKLGFEPSIVTFGSLVNGFCHVNRFYEAMSLVDQIVGLGYEPNVVIYNTIIDSLCEKGQVNTALDVLKHMKKMGIRPDVVTYNSLITRLFHSGTWGVSARILSDMMRMGISPDVITFSALIDVYGKEGQLLEAKKQYNEMIQRSVNPNIVTYNSLINGLCIHGLLDEAKKVLNVLVSKGFFPNAVTYNTLINGYCKAKRVDDGMKILCVMSRDGVDGDTFTYNTLYQGYCQAGKFSAAEKVLGRMVSCGVHPDMYTFNILLDGLCDHGKIGKALVRLEDLQKSKTVVGIITYNIIIKGLCKADKVEDAWYLFCSLALKGVSPDVITYITMMIGLRRKRLWREAHELYRKMQKEDGLMPIK</sequence>
<keyword id="KW-1185">Reference proteome</keyword>
<keyword id="KW-0677">Repeat</keyword>
<feature type="chain" id="PRO_0000342758" description="Pentatricopeptide repeat-containing protein At1g06580">
    <location>
        <begin position="1"/>
        <end position="500"/>
    </location>
</feature>
<feature type="repeat" description="PPR 1">
    <location>
        <begin position="78"/>
        <end position="112"/>
    </location>
</feature>
<feature type="repeat" description="PPR 2">
    <location>
        <begin position="113"/>
        <end position="147"/>
    </location>
</feature>
<feature type="repeat" description="PPR 3">
    <location>
        <begin position="148"/>
        <end position="182"/>
    </location>
</feature>
<feature type="repeat" description="PPR 4">
    <location>
        <begin position="183"/>
        <end position="217"/>
    </location>
</feature>
<feature type="repeat" description="PPR 5">
    <location>
        <begin position="218"/>
        <end position="252"/>
    </location>
</feature>
<feature type="repeat" description="PPR 6">
    <location>
        <begin position="253"/>
        <end position="287"/>
    </location>
</feature>
<feature type="repeat" description="PPR 7">
    <location>
        <begin position="288"/>
        <end position="322"/>
    </location>
</feature>
<feature type="repeat" description="PPR 8">
    <location>
        <begin position="323"/>
        <end position="357"/>
    </location>
</feature>
<feature type="repeat" description="PPR 9">
    <location>
        <begin position="358"/>
        <end position="392"/>
    </location>
</feature>
<feature type="repeat" description="PPR 10">
    <location>
        <begin position="393"/>
        <end position="427"/>
    </location>
</feature>
<feature type="repeat" description="PPR 11">
    <location>
        <begin position="428"/>
        <end position="462"/>
    </location>
</feature>
<feature type="repeat" description="PPR 12">
    <location>
        <begin position="463"/>
        <end position="498"/>
    </location>
</feature>
<gene>
    <name type="ordered locus">At1g06580</name>
    <name type="ORF">F12K11.8</name>
</gene>
<name>PPR17_ARATH</name>
<evidence type="ECO:0000305" key="1"/>
<dbReference type="EMBL" id="AC007592">
    <property type="protein sequence ID" value="AAF24812.1"/>
    <property type="molecule type" value="Genomic_DNA"/>
</dbReference>
<dbReference type="EMBL" id="CP002684">
    <property type="protein sequence ID" value="AEE28008.1"/>
    <property type="molecule type" value="Genomic_DNA"/>
</dbReference>
<dbReference type="EMBL" id="AK229240">
    <property type="status" value="NOT_ANNOTATED_CDS"/>
    <property type="molecule type" value="mRNA"/>
</dbReference>
<dbReference type="RefSeq" id="NP_172145.1">
    <property type="nucleotide sequence ID" value="NM_100537.4"/>
</dbReference>
<dbReference type="SMR" id="Q9SHK2"/>
<dbReference type="FunCoup" id="Q9SHK2">
    <property type="interactions" value="29"/>
</dbReference>
<dbReference type="STRING" id="3702.Q9SHK2"/>
<dbReference type="iPTMnet" id="Q9SHK2"/>
<dbReference type="PaxDb" id="3702-AT1G06580.1"/>
<dbReference type="EnsemblPlants" id="AT1G06580.1">
    <property type="protein sequence ID" value="AT1G06580.1"/>
    <property type="gene ID" value="AT1G06580"/>
</dbReference>
<dbReference type="GeneID" id="837169"/>
<dbReference type="Gramene" id="AT1G06580.1">
    <property type="protein sequence ID" value="AT1G06580.1"/>
    <property type="gene ID" value="AT1G06580"/>
</dbReference>
<dbReference type="KEGG" id="ath:AT1G06580"/>
<dbReference type="Araport" id="AT1G06580"/>
<dbReference type="TAIR" id="AT1G06580">
    <property type="gene designation" value="PPR1"/>
</dbReference>
<dbReference type="eggNOG" id="KOG4197">
    <property type="taxonomic scope" value="Eukaryota"/>
</dbReference>
<dbReference type="HOGENOM" id="CLU_002706_49_0_1"/>
<dbReference type="InParanoid" id="Q9SHK2"/>
<dbReference type="OMA" id="FCDMAES"/>
<dbReference type="PhylomeDB" id="Q9SHK2"/>
<dbReference type="PRO" id="PR:Q9SHK2"/>
<dbReference type="Proteomes" id="UP000006548">
    <property type="component" value="Chromosome 1"/>
</dbReference>
<dbReference type="ExpressionAtlas" id="Q9SHK2">
    <property type="expression patterns" value="baseline and differential"/>
</dbReference>
<dbReference type="GO" id="GO:0042742">
    <property type="term" value="P:defense response to bacterium"/>
    <property type="evidence" value="ECO:0000315"/>
    <property type="project" value="TAIR"/>
</dbReference>
<dbReference type="Gene3D" id="1.25.40.10">
    <property type="entry name" value="Tetratricopeptide repeat domain"/>
    <property type="match status" value="5"/>
</dbReference>
<dbReference type="InterPro" id="IPR002885">
    <property type="entry name" value="Pentatricopeptide_rpt"/>
</dbReference>
<dbReference type="InterPro" id="IPR011990">
    <property type="entry name" value="TPR-like_helical_dom_sf"/>
</dbReference>
<dbReference type="NCBIfam" id="TIGR00756">
    <property type="entry name" value="PPR"/>
    <property type="match status" value="11"/>
</dbReference>
<dbReference type="PANTHER" id="PTHR47936:SF1">
    <property type="entry name" value="PENTATRICOPEPTIDE REPEAT-CONTAINING PROTEIN GUN1, CHLOROPLASTIC"/>
    <property type="match status" value="1"/>
</dbReference>
<dbReference type="PANTHER" id="PTHR47936">
    <property type="entry name" value="PPR_LONG DOMAIN-CONTAINING PROTEIN"/>
    <property type="match status" value="1"/>
</dbReference>
<dbReference type="Pfam" id="PF12854">
    <property type="entry name" value="PPR_1"/>
    <property type="match status" value="1"/>
</dbReference>
<dbReference type="Pfam" id="PF13041">
    <property type="entry name" value="PPR_2"/>
    <property type="match status" value="5"/>
</dbReference>
<dbReference type="PROSITE" id="PS51375">
    <property type="entry name" value="PPR"/>
    <property type="match status" value="12"/>
</dbReference>
<proteinExistence type="evidence at transcript level"/>
<reference key="1">
    <citation type="journal article" date="2000" name="Nature">
        <title>Sequence and analysis of chromosome 1 of the plant Arabidopsis thaliana.</title>
        <authorList>
            <person name="Theologis A."/>
            <person name="Ecker J.R."/>
            <person name="Palm C.J."/>
            <person name="Federspiel N.A."/>
            <person name="Kaul S."/>
            <person name="White O."/>
            <person name="Alonso J."/>
            <person name="Altafi H."/>
            <person name="Araujo R."/>
            <person name="Bowman C.L."/>
            <person name="Brooks S.Y."/>
            <person name="Buehler E."/>
            <person name="Chan A."/>
            <person name="Chao Q."/>
            <person name="Chen H."/>
            <person name="Cheuk R.F."/>
            <person name="Chin C.W."/>
            <person name="Chung M.K."/>
            <person name="Conn L."/>
            <person name="Conway A.B."/>
            <person name="Conway A.R."/>
            <person name="Creasy T.H."/>
            <person name="Dewar K."/>
            <person name="Dunn P."/>
            <person name="Etgu P."/>
            <person name="Feldblyum T.V."/>
            <person name="Feng J.-D."/>
            <person name="Fong B."/>
            <person name="Fujii C.Y."/>
            <person name="Gill J.E."/>
            <person name="Goldsmith A.D."/>
            <person name="Haas B."/>
            <person name="Hansen N.F."/>
            <person name="Hughes B."/>
            <person name="Huizar L."/>
            <person name="Hunter J.L."/>
            <person name="Jenkins J."/>
            <person name="Johnson-Hopson C."/>
            <person name="Khan S."/>
            <person name="Khaykin E."/>
            <person name="Kim C.J."/>
            <person name="Koo H.L."/>
            <person name="Kremenetskaia I."/>
            <person name="Kurtz D.B."/>
            <person name="Kwan A."/>
            <person name="Lam B."/>
            <person name="Langin-Hooper S."/>
            <person name="Lee A."/>
            <person name="Lee J.M."/>
            <person name="Lenz C.A."/>
            <person name="Li J.H."/>
            <person name="Li Y.-P."/>
            <person name="Lin X."/>
            <person name="Liu S.X."/>
            <person name="Liu Z.A."/>
            <person name="Luros J.S."/>
            <person name="Maiti R."/>
            <person name="Marziali A."/>
            <person name="Militscher J."/>
            <person name="Miranda M."/>
            <person name="Nguyen M."/>
            <person name="Nierman W.C."/>
            <person name="Osborne B.I."/>
            <person name="Pai G."/>
            <person name="Peterson J."/>
            <person name="Pham P.K."/>
            <person name="Rizzo M."/>
            <person name="Rooney T."/>
            <person name="Rowley D."/>
            <person name="Sakano H."/>
            <person name="Salzberg S.L."/>
            <person name="Schwartz J.R."/>
            <person name="Shinn P."/>
            <person name="Southwick A.M."/>
            <person name="Sun H."/>
            <person name="Tallon L.J."/>
            <person name="Tambunga G."/>
            <person name="Toriumi M.J."/>
            <person name="Town C.D."/>
            <person name="Utterback T."/>
            <person name="Van Aken S."/>
            <person name="Vaysberg M."/>
            <person name="Vysotskaia V.S."/>
            <person name="Walker M."/>
            <person name="Wu D."/>
            <person name="Yu G."/>
            <person name="Fraser C.M."/>
            <person name="Venter J.C."/>
            <person name="Davis R.W."/>
        </authorList>
    </citation>
    <scope>NUCLEOTIDE SEQUENCE [LARGE SCALE GENOMIC DNA]</scope>
    <source>
        <strain>cv. Columbia</strain>
    </source>
</reference>
<reference key="2">
    <citation type="journal article" date="2017" name="Plant J.">
        <title>Araport11: a complete reannotation of the Arabidopsis thaliana reference genome.</title>
        <authorList>
            <person name="Cheng C.Y."/>
            <person name="Krishnakumar V."/>
            <person name="Chan A.P."/>
            <person name="Thibaud-Nissen F."/>
            <person name="Schobel S."/>
            <person name="Town C.D."/>
        </authorList>
    </citation>
    <scope>GENOME REANNOTATION</scope>
    <source>
        <strain>cv. Columbia</strain>
    </source>
</reference>
<reference key="3">
    <citation type="submission" date="2006-07" db="EMBL/GenBank/DDBJ databases">
        <title>Large-scale analysis of RIKEN Arabidopsis full-length (RAFL) cDNAs.</title>
        <authorList>
            <person name="Totoki Y."/>
            <person name="Seki M."/>
            <person name="Ishida J."/>
            <person name="Nakajima M."/>
            <person name="Enju A."/>
            <person name="Kamiya A."/>
            <person name="Narusaka M."/>
            <person name="Shin-i T."/>
            <person name="Nakagawa M."/>
            <person name="Sakamoto N."/>
            <person name="Oishi K."/>
            <person name="Kohara Y."/>
            <person name="Kobayashi M."/>
            <person name="Toyoda A."/>
            <person name="Sakaki Y."/>
            <person name="Sakurai T."/>
            <person name="Iida K."/>
            <person name="Akiyama K."/>
            <person name="Satou M."/>
            <person name="Toyoda T."/>
            <person name="Konagaya A."/>
            <person name="Carninci P."/>
            <person name="Kawai J."/>
            <person name="Hayashizaki Y."/>
            <person name="Shinozaki K."/>
        </authorList>
    </citation>
    <scope>NUCLEOTIDE SEQUENCE [LARGE SCALE MRNA]</scope>
    <source>
        <strain>cv. Columbia</strain>
    </source>
</reference>
<reference key="4">
    <citation type="journal article" date="2004" name="Plant Cell">
        <title>Genome-wide analysis of Arabidopsis pentatricopeptide repeat proteins reveals their essential role in organelle biogenesis.</title>
        <authorList>
            <person name="Lurin C."/>
            <person name="Andres C."/>
            <person name="Aubourg S."/>
            <person name="Bellaoui M."/>
            <person name="Bitton F."/>
            <person name="Bruyere C."/>
            <person name="Caboche M."/>
            <person name="Debast C."/>
            <person name="Gualberto J."/>
            <person name="Hoffmann B."/>
            <person name="Lecharny A."/>
            <person name="Le Ret M."/>
            <person name="Martin-Magniette M.-L."/>
            <person name="Mireau H."/>
            <person name="Peeters N."/>
            <person name="Renou J.-P."/>
            <person name="Szurek B."/>
            <person name="Taconnat L."/>
            <person name="Small I."/>
        </authorList>
    </citation>
    <scope>GENE FAMILY</scope>
</reference>